<organismHost>
    <name type="scientific">Mammalia</name>
    <dbReference type="NCBI Taxonomy" id="40674"/>
</organismHost>
<name>PRO_SMRVH</name>
<proteinExistence type="evidence at protein level"/>
<reference key="1">
    <citation type="journal article" date="1988" name="Virology">
        <title>Molecular cloning, complete nucleotide sequence, and gene structure of the provirus genome of a retrovirus produced in a human lymphoblastoid cell line.</title>
        <authorList>
            <person name="Oda T."/>
            <person name="Ikeda S."/>
            <person name="Watanabe S."/>
            <person name="Hatsushika M."/>
            <person name="Akiyama K."/>
            <person name="Mitsunobu F."/>
        </authorList>
    </citation>
    <scope>NUCLEOTIDE SEQUENCE [GENOMIC RNA]</scope>
    <scope>PROTEIN SEQUENCE OF 319-346</scope>
    <scope>PROTEOLYTIC CLEAVAGE (GAG-PRO POLYPROTEIN)</scope>
</reference>
<reference key="2">
    <citation type="journal article" date="2013" name="Biomed. Res. Int.">
        <title>A genome-wide analysis of RNA pseudoknots that stimulate efficient -1 ribosomal frameshifting or readthrough in animal viruses.</title>
        <authorList>
            <person name="Huang X."/>
            <person name="Cheng Q."/>
            <person name="Du Z."/>
        </authorList>
    </citation>
    <scope>RIBOSOMAL FRAMESHIFT</scope>
</reference>
<sequence length="998" mass="108735">MGQASSHSENDLFISHLKESLKVRRIRVRKKDLVSFFSFIFKTCPWFPQEGSIDSRVWGRVGDCLNDYYRVFGPETIPITTFNYYNLIRDVLTNQSDSPDIQRLCKEGHKILISHSRPPSRQAPVTITTSEKASSRPPSRAPSTCPSVAIDIGSHDTGQSSLYPNLATLTDPPIQSPHSRAHTPPQHLPLLANSKTLHNSGSQDDQLNPADQADLEEAAAQYNNPDWPQLTNTPALPPFRPPSYVSTAVPPVAVAAPVLHAPTSGVPGSPTAPNLPGVALAKPSGPIDETVSLLDGVKTLVTKLSDLALLPPAGVMAFPVTRSQGQVSSNTTGRASPHPDTHTIPEEEEADSGESDSEDDEEESSEPTEPTYTHSYKRLNLKTIEKIKTAVANYGPTAPFTVALVESLSERWLTPSDWFFLSRAALSGGDNILWKSEYEDISKQFAERTRVRPPPKDGPLKIPGASPYQNNDKQAQFPPGLLTQIQSAGLKAWKRLPQKGAATTSLAKIRQGPDESYSDFVSRLQETADRLFGSGESESSFVKHLAYENANPACQSAIRPFRQKELSTMSPLLWYCSAHAVGLAIGAALQNLAPAQLLEPRPAFAIIVTNPAIFQETAPKKIQPPTQLPTQPNAPQASLIKNLGPTTKCPRCKKGFHWASECRSRLDINGQPIIKQGNLEQGPAPGPHYRDELRGFTVHPPIPPANPCPPSNQPRRYVTDLWRATAGSAGLDLCTTTDTILTTQNSPLTLPVGIYGPLPPQTFGLILAEPALPSKGIQVLPGILDNDFEGEIHIILSTTKDLVTIPKGTRLAQIVILPLQQINSNFHKPYRGASAPGSSDVYWVQQISQQRPTLKLKLNGKLFSGILDTGADATVISYTHWPRNWPLTTVATHLRGIGQATNPQQSAQMLKWEDSEGNNGHITPYVLPNLPVNLWGRDILSQMKLVMCSPNDTVMTQMLSQGYLPGQGLGKNNQGITQPITITPKKDKTGLGFHQNLP</sequence>
<feature type="initiator methionine" description="Removed; by host" evidence="3">
    <location>
        <position position="1"/>
    </location>
</feature>
<feature type="chain" id="PRO_0000199553" description="Gag-Pro polyprotein">
    <location>
        <begin position="2"/>
        <end position="998"/>
    </location>
</feature>
<feature type="chain" id="PRO_0000443199" description="Matrix protein p19">
    <location>
        <begin position="2"/>
        <end position="163"/>
    </location>
</feature>
<feature type="chain" id="PRO_0000443200" description="Core protein p16">
    <location>
        <begin position="164"/>
        <end position="318"/>
    </location>
</feature>
<feature type="chain" id="PRO_0000443201" description="Capsid protein p35">
    <location>
        <begin position="319"/>
        <end position="585"/>
    </location>
</feature>
<feature type="chain" id="PRO_0000443202" description="Probable nucleocapsid protein-dUTPase">
    <location>
        <begin position="586"/>
        <end position="842"/>
    </location>
</feature>
<feature type="chain" id="PRO_0000443203" description="Protease 17 kDa">
    <location>
        <begin position="843"/>
        <end position="998"/>
    </location>
</feature>
<feature type="chain" id="PRO_0000443204" description="Protease 13 kDa">
    <location>
        <begin position="843"/>
        <end position="960"/>
    </location>
</feature>
<feature type="peptide" id="PRO_0000443205" description="G-patch peptide">
    <location>
        <begin position="961"/>
        <end position="998"/>
    </location>
</feature>
<feature type="domain" description="Peptidase A2" evidence="5">
    <location>
        <begin position="863"/>
        <end position="939"/>
    </location>
</feature>
<feature type="domain" description="G-patch" evidence="4">
    <location>
        <begin position="950"/>
        <end position="996"/>
    </location>
</feature>
<feature type="region of interest" description="Disordered" evidence="6">
    <location>
        <begin position="115"/>
        <end position="208"/>
    </location>
</feature>
<feature type="region of interest" description="Disordered" evidence="6">
    <location>
        <begin position="323"/>
        <end position="376"/>
    </location>
</feature>
<feature type="region of interest" description="Disordered" evidence="6">
    <location>
        <begin position="446"/>
        <end position="469"/>
    </location>
</feature>
<feature type="compositionally biased region" description="Polar residues" evidence="6">
    <location>
        <begin position="117"/>
        <end position="132"/>
    </location>
</feature>
<feature type="compositionally biased region" description="Polar residues" evidence="6">
    <location>
        <begin position="193"/>
        <end position="206"/>
    </location>
</feature>
<feature type="compositionally biased region" description="Polar residues" evidence="6">
    <location>
        <begin position="323"/>
        <end position="334"/>
    </location>
</feature>
<feature type="compositionally biased region" description="Acidic residues" evidence="6">
    <location>
        <begin position="346"/>
        <end position="366"/>
    </location>
</feature>
<feature type="compositionally biased region" description="Basic and acidic residues" evidence="6">
    <location>
        <begin position="446"/>
        <end position="459"/>
    </location>
</feature>
<feature type="active site" description="Protease; shared with dimeric partner" evidence="5">
    <location>
        <position position="868"/>
    </location>
</feature>
<feature type="site" description="Cleavage; by viral protease" evidence="9">
    <location>
        <begin position="163"/>
        <end position="164"/>
    </location>
</feature>
<feature type="site" description="Cleavage; by viral protease" evidence="9">
    <location>
        <begin position="318"/>
        <end position="319"/>
    </location>
</feature>
<feature type="site" description="Cleavage; by viral protease" evidence="9">
    <location>
        <begin position="585"/>
        <end position="586"/>
    </location>
</feature>
<feature type="lipid moiety-binding region" description="N-myristoyl glycine; by host" evidence="3">
    <location>
        <position position="2"/>
    </location>
</feature>
<gene>
    <name type="primary">pro</name>
    <name type="synonym">prt</name>
</gene>
<accession>P21407</accession>
<dbReference type="EC" id="3.6.1.23" evidence="1"/>
<dbReference type="EC" id="3.4.23.-" evidence="5"/>
<dbReference type="EMBL" id="M23385">
    <property type="protein sequence ID" value="AAA66452.1"/>
    <property type="status" value="ALT_INIT"/>
    <property type="molecule type" value="Genomic_RNA"/>
</dbReference>
<dbReference type="PIR" id="B31827">
    <property type="entry name" value="PRLJHD"/>
</dbReference>
<dbReference type="RefSeq" id="NP_041260.2">
    <property type="nucleotide sequence ID" value="NC_001514.1"/>
</dbReference>
<dbReference type="SMR" id="P21407"/>
<dbReference type="GeneID" id="1491963"/>
<dbReference type="KEGG" id="vg:1491963"/>
<dbReference type="OrthoDB" id="11010at10239"/>
<dbReference type="Proteomes" id="UP000007223">
    <property type="component" value="Segment"/>
</dbReference>
<dbReference type="GO" id="GO:0019013">
    <property type="term" value="C:viral nucleocapsid"/>
    <property type="evidence" value="ECO:0007669"/>
    <property type="project" value="UniProtKB-KW"/>
</dbReference>
<dbReference type="GO" id="GO:0004190">
    <property type="term" value="F:aspartic-type endopeptidase activity"/>
    <property type="evidence" value="ECO:0007669"/>
    <property type="project" value="UniProtKB-KW"/>
</dbReference>
<dbReference type="GO" id="GO:0003677">
    <property type="term" value="F:DNA binding"/>
    <property type="evidence" value="ECO:0007669"/>
    <property type="project" value="UniProtKB-KW"/>
</dbReference>
<dbReference type="GO" id="GO:0004170">
    <property type="term" value="F:dUTP diphosphatase activity"/>
    <property type="evidence" value="ECO:0007669"/>
    <property type="project" value="UniProtKB-EC"/>
</dbReference>
<dbReference type="GO" id="GO:0039660">
    <property type="term" value="F:structural constituent of virion"/>
    <property type="evidence" value="ECO:0007669"/>
    <property type="project" value="UniProtKB-KW"/>
</dbReference>
<dbReference type="GO" id="GO:0008270">
    <property type="term" value="F:zinc ion binding"/>
    <property type="evidence" value="ECO:0007669"/>
    <property type="project" value="InterPro"/>
</dbReference>
<dbReference type="GO" id="GO:0009117">
    <property type="term" value="P:nucleotide metabolic process"/>
    <property type="evidence" value="ECO:0007669"/>
    <property type="project" value="UniProtKB-KW"/>
</dbReference>
<dbReference type="GO" id="GO:0006508">
    <property type="term" value="P:proteolysis"/>
    <property type="evidence" value="ECO:0007669"/>
    <property type="project" value="UniProtKB-KW"/>
</dbReference>
<dbReference type="GO" id="GO:0075523">
    <property type="term" value="P:viral translational frameshifting"/>
    <property type="evidence" value="ECO:0007669"/>
    <property type="project" value="UniProtKB-KW"/>
</dbReference>
<dbReference type="CDD" id="cd05482">
    <property type="entry name" value="HIV_retropepsin_like"/>
    <property type="match status" value="1"/>
</dbReference>
<dbReference type="CDD" id="cd07557">
    <property type="entry name" value="trimeric_dUTPase"/>
    <property type="match status" value="1"/>
</dbReference>
<dbReference type="Gene3D" id="1.10.1200.30">
    <property type="match status" value="1"/>
</dbReference>
<dbReference type="Gene3D" id="2.70.40.10">
    <property type="match status" value="1"/>
</dbReference>
<dbReference type="Gene3D" id="2.40.70.10">
    <property type="entry name" value="Acid Proteases"/>
    <property type="match status" value="1"/>
</dbReference>
<dbReference type="Gene3D" id="1.10.375.10">
    <property type="entry name" value="Human Immunodeficiency Virus Type 1 Capsid Protein"/>
    <property type="match status" value="1"/>
</dbReference>
<dbReference type="Gene3D" id="1.10.150.490">
    <property type="entry name" value="Retroviral GAG p10 protein"/>
    <property type="match status" value="1"/>
</dbReference>
<dbReference type="InterPro" id="IPR001969">
    <property type="entry name" value="Aspartic_peptidase_AS"/>
</dbReference>
<dbReference type="InterPro" id="IPR003322">
    <property type="entry name" value="B_retro_matrix"/>
</dbReference>
<dbReference type="InterPro" id="IPR038124">
    <property type="entry name" value="B_retro_matrix_sf"/>
</dbReference>
<dbReference type="InterPro" id="IPR029054">
    <property type="entry name" value="dUTPase-like"/>
</dbReference>
<dbReference type="InterPro" id="IPR036157">
    <property type="entry name" value="dUTPase-like_sf"/>
</dbReference>
<dbReference type="InterPro" id="IPR033704">
    <property type="entry name" value="dUTPase_trimeric"/>
</dbReference>
<dbReference type="InterPro" id="IPR000467">
    <property type="entry name" value="G_patch_dom"/>
</dbReference>
<dbReference type="InterPro" id="IPR045345">
    <property type="entry name" value="Gag_p24_C"/>
</dbReference>
<dbReference type="InterPro" id="IPR001995">
    <property type="entry name" value="Peptidase_A2_cat"/>
</dbReference>
<dbReference type="InterPro" id="IPR021109">
    <property type="entry name" value="Peptidase_aspartic_dom_sf"/>
</dbReference>
<dbReference type="InterPro" id="IPR050195">
    <property type="entry name" value="Primate_lentivir_Gag_pol-like"/>
</dbReference>
<dbReference type="InterPro" id="IPR034170">
    <property type="entry name" value="Retropepsin-like_cat_dom"/>
</dbReference>
<dbReference type="InterPro" id="IPR018061">
    <property type="entry name" value="Retropepsins"/>
</dbReference>
<dbReference type="InterPro" id="IPR008916">
    <property type="entry name" value="Retrov_capsid_C"/>
</dbReference>
<dbReference type="InterPro" id="IPR008919">
    <property type="entry name" value="Retrov_capsid_N"/>
</dbReference>
<dbReference type="InterPro" id="IPR010999">
    <property type="entry name" value="Retrovr_matrix"/>
</dbReference>
<dbReference type="InterPro" id="IPR036875">
    <property type="entry name" value="Znf_CCHC_sf"/>
</dbReference>
<dbReference type="PANTHER" id="PTHR40389">
    <property type="entry name" value="ENDOGENOUS RETROVIRUS GROUP K MEMBER 24 GAG POLYPROTEIN-RELATED"/>
    <property type="match status" value="1"/>
</dbReference>
<dbReference type="PANTHER" id="PTHR40389:SF3">
    <property type="entry name" value="IGE-BINDING PROTEIN"/>
    <property type="match status" value="1"/>
</dbReference>
<dbReference type="Pfam" id="PF00692">
    <property type="entry name" value="dUTPase"/>
    <property type="match status" value="1"/>
</dbReference>
<dbReference type="Pfam" id="PF01585">
    <property type="entry name" value="G-patch"/>
    <property type="match status" value="1"/>
</dbReference>
<dbReference type="Pfam" id="PF02337">
    <property type="entry name" value="Gag_p10"/>
    <property type="match status" value="1"/>
</dbReference>
<dbReference type="Pfam" id="PF00607">
    <property type="entry name" value="Gag_p24"/>
    <property type="match status" value="1"/>
</dbReference>
<dbReference type="Pfam" id="PF19317">
    <property type="entry name" value="Gag_p24_C"/>
    <property type="match status" value="1"/>
</dbReference>
<dbReference type="Pfam" id="PF00077">
    <property type="entry name" value="RVP"/>
    <property type="match status" value="1"/>
</dbReference>
<dbReference type="Pfam" id="PF14787">
    <property type="entry name" value="zf-CCHC_5"/>
    <property type="match status" value="1"/>
</dbReference>
<dbReference type="SMART" id="SM00443">
    <property type="entry name" value="G_patch"/>
    <property type="match status" value="1"/>
</dbReference>
<dbReference type="SUPFAM" id="SSF50630">
    <property type="entry name" value="Acid proteases"/>
    <property type="match status" value="1"/>
</dbReference>
<dbReference type="SUPFAM" id="SSF51283">
    <property type="entry name" value="dUTPase-like"/>
    <property type="match status" value="1"/>
</dbReference>
<dbReference type="SUPFAM" id="SSF47836">
    <property type="entry name" value="Retroviral matrix proteins"/>
    <property type="match status" value="1"/>
</dbReference>
<dbReference type="SUPFAM" id="SSF47353">
    <property type="entry name" value="Retrovirus capsid dimerization domain-like"/>
    <property type="match status" value="1"/>
</dbReference>
<dbReference type="SUPFAM" id="SSF47943">
    <property type="entry name" value="Retrovirus capsid protein, N-terminal core domain"/>
    <property type="match status" value="1"/>
</dbReference>
<dbReference type="SUPFAM" id="SSF57756">
    <property type="entry name" value="Retrovirus zinc finger-like domains"/>
    <property type="match status" value="1"/>
</dbReference>
<dbReference type="PROSITE" id="PS50175">
    <property type="entry name" value="ASP_PROT_RETROV"/>
    <property type="match status" value="1"/>
</dbReference>
<dbReference type="PROSITE" id="PS00141">
    <property type="entry name" value="ASP_PROTEASE"/>
    <property type="match status" value="1"/>
</dbReference>
<dbReference type="PROSITE" id="PS50174">
    <property type="entry name" value="G_PATCH"/>
    <property type="match status" value="1"/>
</dbReference>
<keyword id="KW-0064">Aspartyl protease</keyword>
<keyword id="KW-0167">Capsid protein</keyword>
<keyword id="KW-0903">Direct protein sequencing</keyword>
<keyword id="KW-0238">DNA-binding</keyword>
<keyword id="KW-0378">Hydrolase</keyword>
<keyword id="KW-0449">Lipoprotein</keyword>
<keyword id="KW-0460">Magnesium</keyword>
<keyword id="KW-0519">Myristate</keyword>
<keyword id="KW-0546">Nucleotide metabolism</keyword>
<keyword id="KW-0645">Protease</keyword>
<keyword id="KW-0688">Ribosomal frameshifting</keyword>
<keyword id="KW-0468">Viral matrix protein</keyword>
<keyword id="KW-0543">Viral nucleoprotein</keyword>
<keyword id="KW-0946">Virion</keyword>
<comment type="function">
    <text evidence="7">Matrix protein p10: Matrix protein.</text>
</comment>
<comment type="function">
    <text evidence="7">Nucleocapsid protein p14: Nucleocapsid protein.</text>
</comment>
<comment type="function">
    <text evidence="7">Capsid protein p27: capsid protein.</text>
</comment>
<comment type="function">
    <molecule>Protease 17 kDa</molecule>
    <text evidence="1 5">The aspartyl protease mediates proteolytic cleavages of Gag and Gag-Pol polyproteins during or shortly after the release of the virion from the plasma membrane. Cleavages take place as an ordered, step-wise cascade to yield mature proteins. This process is called maturation. Displays maximal activity during the budding process just prior to particle release from the cell.</text>
</comment>
<comment type="function">
    <molecule>Protease 13 kDa</molecule>
    <text evidence="1 5">The aspartyl protease mediates proteolytic cleavages of Gag and Gag-Pol polyproteins during or shortly after the release of the virion from the plasma membrane. Cleavages take place as an ordered, step-wise cascade to yield mature proteins. This process is called maturation. Displays maximal activity during the budding process just prior to particle release from the cell.</text>
</comment>
<comment type="function">
    <molecule>G-patch peptide</molecule>
    <text evidence="1">Enhances the activity of the reverse transcriptase. May be part of the mature RT.</text>
</comment>
<comment type="catalytic activity">
    <reaction evidence="1">
        <text>dUTP + H2O = dUMP + diphosphate + H(+)</text>
        <dbReference type="Rhea" id="RHEA:10248"/>
        <dbReference type="ChEBI" id="CHEBI:15377"/>
        <dbReference type="ChEBI" id="CHEBI:15378"/>
        <dbReference type="ChEBI" id="CHEBI:33019"/>
        <dbReference type="ChEBI" id="CHEBI:61555"/>
        <dbReference type="ChEBI" id="CHEBI:246422"/>
        <dbReference type="EC" id="3.6.1.23"/>
    </reaction>
</comment>
<comment type="subunit">
    <molecule>Protease 17 kDa</molecule>
    <text evidence="1">Homodimer.</text>
</comment>
<comment type="subunit">
    <molecule>G-patch peptide</molecule>
    <text evidence="1">Interacts with the reverse transcriptase/ribonuclease H. Nucleocapsid protein-dUTPase: Homotrimer.</text>
</comment>
<comment type="subunit">
    <molecule>Probable nucleocapsid protein-dUTPase</molecule>
    <text evidence="1">Homotrimer.</text>
</comment>
<comment type="subcellular location">
    <molecule>Capsid protein p35</molecule>
    <subcellularLocation>
        <location evidence="7">Virion</location>
    </subcellularLocation>
</comment>
<comment type="subcellular location">
    <molecule>Matrix protein p19</molecule>
    <subcellularLocation>
        <location evidence="7">Virion</location>
    </subcellularLocation>
</comment>
<comment type="subcellular location">
    <molecule>Probable nucleocapsid protein-dUTPase</molecule>
    <subcellularLocation>
        <location evidence="7">Virion</location>
    </subcellularLocation>
</comment>
<comment type="subcellular location">
    <molecule>Protease 13 kDa</molecule>
    <subcellularLocation>
        <location evidence="1">Virion</location>
    </subcellularLocation>
</comment>
<comment type="subcellular location">
    <molecule>Protease 17 kDa</molecule>
    <subcellularLocation>
        <location evidence="1">Virion</location>
    </subcellularLocation>
</comment>
<comment type="alternative products">
    <event type="ribosomal frameshifting"/>
    <isoform>
        <id>P21407-1</id>
        <name>Gag-Pro polyprotein</name>
        <sequence type="displayed"/>
    </isoform>
    <isoform>
        <id>P21411-1</id>
        <name>Gag polyprotein</name>
        <sequence type="external"/>
    </isoform>
    <isoform>
        <id>P03364-1</id>
        <name>Gag-Pro-Pol polyprotein</name>
        <sequence type="external"/>
    </isoform>
</comment>
<comment type="domain">
    <molecule>Gag-Pro polyprotein</molecule>
    <text evidence="7">Late-budding domains (L domains) are short sequence motifs essential for viral particle release. They can occur individually or in close proximity within structural proteins. They interacts with sorting cellular proteins of the multivesicular body (MVB) pathway. Most of these proteins are class E vacuolar protein sorting factors belonging to ESCRT-I, ESCRT-II or ESCRT-III complexes. Gag-p35 contains one L domain: a PTAP/PSAP motif, which interacts with the UEV domain of TSG101.</text>
</comment>
<comment type="domain">
    <molecule>Protease 17 kDa</molecule>
    <text evidence="1">The glycine-rich G-patch domain (GPD) is present at the C-terminus of the protease from which it is then detached by the protease itself.</text>
</comment>
<comment type="PTM">
    <molecule>Gag-Pro polyprotein</molecule>
    <text evidence="2">Myristoylated. Myristoylation of the matrix (MA) domain mediates the transport and binding of Gag polyproteins to the host plasma membrane and is required for the assembly of viral particles.</text>
</comment>
<comment type="PTM">
    <molecule>Gag-Pro polyprotein</molecule>
    <text evidence="9">Specific enzymatic cleavages in vivo yield mature proteins.</text>
</comment>
<comment type="miscellaneous">
    <molecule>Isoform Gag-Pro polyprotein</molecule>
    <text evidence="8">Produced by -1 ribosomal frameshifting between gag-pro.</text>
</comment>
<comment type="sequence caution" evidence="7">
    <conflict type="erroneous initiation">
        <sequence resource="EMBL-CDS" id="AAA66452"/>
    </conflict>
</comment>
<organism>
    <name type="scientific">Squirrel monkey retrovirus</name>
    <name type="common">SMRV-H</name>
    <name type="synonym">SMRV-HLB</name>
    <dbReference type="NCBI Taxonomy" id="11856"/>
    <lineage>
        <taxon>Viruses</taxon>
        <taxon>Riboviria</taxon>
        <taxon>Pararnavirae</taxon>
        <taxon>Artverviricota</taxon>
        <taxon>Revtraviricetes</taxon>
        <taxon>Ortervirales</taxon>
        <taxon>Retroviridae</taxon>
        <taxon>Orthoretrovirinae</taxon>
        <taxon>Betaretrovirus</taxon>
    </lineage>
</organism>
<protein>
    <recommendedName>
        <fullName>Gag-Pro polyprotein</fullName>
    </recommendedName>
    <component>
        <recommendedName>
            <fullName>Matrix protein p19</fullName>
        </recommendedName>
    </component>
    <component>
        <recommendedName>
            <fullName>Core protein p16</fullName>
        </recommendedName>
    </component>
    <component>
        <recommendedName>
            <fullName>Capsid protein p35</fullName>
        </recommendedName>
        <alternativeName>
            <fullName>Capsid protein p34</fullName>
        </alternativeName>
    </component>
    <component>
        <recommendedName>
            <fullName>Probable nucleocapsid protein-dUTPase</fullName>
            <shortName>NC-dUTPase</shortName>
            <ecNumber evidence="1">3.6.1.23</ecNumber>
        </recommendedName>
    </component>
    <component>
        <recommendedName>
            <fullName evidence="1">Protease 17 kDa</fullName>
            <ecNumber evidence="5">3.4.23.-</ecNumber>
        </recommendedName>
    </component>
    <component>
        <recommendedName>
            <fullName evidence="1">Protease 13 kDa</fullName>
            <ecNumber evidence="5">3.4.23.-</ecNumber>
        </recommendedName>
    </component>
    <component>
        <recommendedName>
            <fullName evidence="1">G-patch peptide</fullName>
        </recommendedName>
    </component>
</protein>
<evidence type="ECO:0000250" key="1">
    <source>
        <dbReference type="UniProtKB" id="P07570"/>
    </source>
</evidence>
<evidence type="ECO:0000250" key="2">
    <source>
        <dbReference type="UniProtKB" id="P10258"/>
    </source>
</evidence>
<evidence type="ECO:0000255" key="3"/>
<evidence type="ECO:0000255" key="4">
    <source>
        <dbReference type="PROSITE-ProRule" id="PRU00092"/>
    </source>
</evidence>
<evidence type="ECO:0000255" key="5">
    <source>
        <dbReference type="PROSITE-ProRule" id="PRU00275"/>
    </source>
</evidence>
<evidence type="ECO:0000256" key="6">
    <source>
        <dbReference type="SAM" id="MobiDB-lite"/>
    </source>
</evidence>
<evidence type="ECO:0000305" key="7"/>
<evidence type="ECO:0000305" key="8">
    <source>
    </source>
</evidence>
<evidence type="ECO:0000305" key="9">
    <source>
    </source>
</evidence>